<comment type="function">
    <text evidence="1">Catalyzes the 2-thiolation of uridine at the wobble position (U34) of tRNA, leading to the formation of s(2)U34.</text>
</comment>
<comment type="catalytic activity">
    <reaction evidence="1">
        <text>S-sulfanyl-L-cysteinyl-[protein] + uridine(34) in tRNA + AH2 + ATP = 2-thiouridine(34) in tRNA + L-cysteinyl-[protein] + A + AMP + diphosphate + H(+)</text>
        <dbReference type="Rhea" id="RHEA:47032"/>
        <dbReference type="Rhea" id="RHEA-COMP:10131"/>
        <dbReference type="Rhea" id="RHEA-COMP:11726"/>
        <dbReference type="Rhea" id="RHEA-COMP:11727"/>
        <dbReference type="Rhea" id="RHEA-COMP:11728"/>
        <dbReference type="ChEBI" id="CHEBI:13193"/>
        <dbReference type="ChEBI" id="CHEBI:15378"/>
        <dbReference type="ChEBI" id="CHEBI:17499"/>
        <dbReference type="ChEBI" id="CHEBI:29950"/>
        <dbReference type="ChEBI" id="CHEBI:30616"/>
        <dbReference type="ChEBI" id="CHEBI:33019"/>
        <dbReference type="ChEBI" id="CHEBI:61963"/>
        <dbReference type="ChEBI" id="CHEBI:65315"/>
        <dbReference type="ChEBI" id="CHEBI:87170"/>
        <dbReference type="ChEBI" id="CHEBI:456215"/>
        <dbReference type="EC" id="2.8.1.13"/>
    </reaction>
</comment>
<comment type="subcellular location">
    <subcellularLocation>
        <location evidence="1">Cytoplasm</location>
    </subcellularLocation>
</comment>
<comment type="similarity">
    <text evidence="1">Belongs to the MnmA/TRMU family.</text>
</comment>
<comment type="sequence caution" evidence="2">
    <conflict type="erroneous initiation">
        <sequence resource="EMBL-CDS" id="ABS77207"/>
    </conflict>
</comment>
<protein>
    <recommendedName>
        <fullName evidence="1">tRNA-specific 2-thiouridylase MnmA</fullName>
        <ecNumber evidence="1">2.8.1.13</ecNumber>
    </recommendedName>
</protein>
<name>MNMA_COXBN</name>
<organism>
    <name type="scientific">Coxiella burnetii (strain Dugway 5J108-111)</name>
    <dbReference type="NCBI Taxonomy" id="434922"/>
    <lineage>
        <taxon>Bacteria</taxon>
        <taxon>Pseudomonadati</taxon>
        <taxon>Pseudomonadota</taxon>
        <taxon>Gammaproteobacteria</taxon>
        <taxon>Legionellales</taxon>
        <taxon>Coxiellaceae</taxon>
        <taxon>Coxiella</taxon>
    </lineage>
</organism>
<sequence>MPNFEQNQVIAVGLSGGVDSSVAALVLKEKGYEVIGLFMQNWETDSKDPFCTAEQDLSDAKAIADHIGIPLYVVNFSKAYWNHVFQHCLDEFAQGRTPNPDVWCNREIKFKSLLDHAKKLGATHLATGHYACIQNENNEYRLLKSNDSHKDQSYFLHLLNQYQLANSVFPIGGYQKSEVRAIAKKRGFINHAKKDSTGICFIGERKFKDFLNEFLLAQPGNIETPEGKIIGKHDGIMFYTVGQRKGLHIGGRPDAGEAPWYVVDKDVKRNVLIVVQGYEHPLLYSQELTCTNLHWIRDTEPSFPLTCKAKTRCRQADQTCVVTRLDNDHCHVQFEHPQRAITRGQSVVFYLGNECLGGGIIN</sequence>
<reference key="1">
    <citation type="journal article" date="2009" name="Infect. Immun.">
        <title>Comparative genomics reveal extensive transposon-mediated genomic plasticity and diversity among potential effector proteins within the genus Coxiella.</title>
        <authorList>
            <person name="Beare P.A."/>
            <person name="Unsworth N."/>
            <person name="Andoh M."/>
            <person name="Voth D.E."/>
            <person name="Omsland A."/>
            <person name="Gilk S.D."/>
            <person name="Williams K.P."/>
            <person name="Sobral B.W."/>
            <person name="Kupko J.J. III"/>
            <person name="Porcella S.F."/>
            <person name="Samuel J.E."/>
            <person name="Heinzen R.A."/>
        </authorList>
    </citation>
    <scope>NUCLEOTIDE SEQUENCE [LARGE SCALE GENOMIC DNA]</scope>
    <source>
        <strain>Dugway 5J108-111</strain>
    </source>
</reference>
<dbReference type="EC" id="2.8.1.13" evidence="1"/>
<dbReference type="EMBL" id="CP000733">
    <property type="protein sequence ID" value="ABS77207.2"/>
    <property type="status" value="ALT_INIT"/>
    <property type="molecule type" value="Genomic_DNA"/>
</dbReference>
<dbReference type="RefSeq" id="WP_043880902.1">
    <property type="nucleotide sequence ID" value="NC_009727.1"/>
</dbReference>
<dbReference type="SMR" id="A9KE87"/>
<dbReference type="KEGG" id="cbd:CBUD_1245"/>
<dbReference type="HOGENOM" id="CLU_035188_1_0_6"/>
<dbReference type="Proteomes" id="UP000008555">
    <property type="component" value="Chromosome"/>
</dbReference>
<dbReference type="GO" id="GO:0005737">
    <property type="term" value="C:cytoplasm"/>
    <property type="evidence" value="ECO:0007669"/>
    <property type="project" value="UniProtKB-SubCell"/>
</dbReference>
<dbReference type="GO" id="GO:0005524">
    <property type="term" value="F:ATP binding"/>
    <property type="evidence" value="ECO:0007669"/>
    <property type="project" value="UniProtKB-KW"/>
</dbReference>
<dbReference type="GO" id="GO:0000049">
    <property type="term" value="F:tRNA binding"/>
    <property type="evidence" value="ECO:0007669"/>
    <property type="project" value="UniProtKB-KW"/>
</dbReference>
<dbReference type="GO" id="GO:0103016">
    <property type="term" value="F:tRNA-uridine 2-sulfurtransferase activity"/>
    <property type="evidence" value="ECO:0007669"/>
    <property type="project" value="UniProtKB-EC"/>
</dbReference>
<dbReference type="GO" id="GO:0002143">
    <property type="term" value="P:tRNA wobble position uridine thiolation"/>
    <property type="evidence" value="ECO:0007669"/>
    <property type="project" value="TreeGrafter"/>
</dbReference>
<dbReference type="CDD" id="cd01998">
    <property type="entry name" value="MnmA_TRMU-like"/>
    <property type="match status" value="1"/>
</dbReference>
<dbReference type="FunFam" id="2.30.30.280:FF:000001">
    <property type="entry name" value="tRNA-specific 2-thiouridylase MnmA"/>
    <property type="match status" value="1"/>
</dbReference>
<dbReference type="FunFam" id="2.40.30.10:FF:000023">
    <property type="entry name" value="tRNA-specific 2-thiouridylase MnmA"/>
    <property type="match status" value="1"/>
</dbReference>
<dbReference type="FunFam" id="3.40.50.620:FF:000004">
    <property type="entry name" value="tRNA-specific 2-thiouridylase MnmA"/>
    <property type="match status" value="1"/>
</dbReference>
<dbReference type="Gene3D" id="2.30.30.280">
    <property type="entry name" value="Adenine nucleotide alpha hydrolases-like domains"/>
    <property type="match status" value="1"/>
</dbReference>
<dbReference type="Gene3D" id="3.40.50.620">
    <property type="entry name" value="HUPs"/>
    <property type="match status" value="1"/>
</dbReference>
<dbReference type="Gene3D" id="2.40.30.10">
    <property type="entry name" value="Translation factors"/>
    <property type="match status" value="1"/>
</dbReference>
<dbReference type="HAMAP" id="MF_00144">
    <property type="entry name" value="tRNA_thiouridyl_MnmA"/>
    <property type="match status" value="1"/>
</dbReference>
<dbReference type="InterPro" id="IPR004506">
    <property type="entry name" value="MnmA-like"/>
</dbReference>
<dbReference type="InterPro" id="IPR046885">
    <property type="entry name" value="MnmA-like_C"/>
</dbReference>
<dbReference type="InterPro" id="IPR046884">
    <property type="entry name" value="MnmA-like_central"/>
</dbReference>
<dbReference type="InterPro" id="IPR023382">
    <property type="entry name" value="MnmA-like_central_sf"/>
</dbReference>
<dbReference type="InterPro" id="IPR014729">
    <property type="entry name" value="Rossmann-like_a/b/a_fold"/>
</dbReference>
<dbReference type="NCBIfam" id="NF001138">
    <property type="entry name" value="PRK00143.1"/>
    <property type="match status" value="1"/>
</dbReference>
<dbReference type="NCBIfam" id="TIGR00420">
    <property type="entry name" value="trmU"/>
    <property type="match status" value="1"/>
</dbReference>
<dbReference type="PANTHER" id="PTHR11933:SF5">
    <property type="entry name" value="MITOCHONDRIAL TRNA-SPECIFIC 2-THIOURIDYLASE 1"/>
    <property type="match status" value="1"/>
</dbReference>
<dbReference type="PANTHER" id="PTHR11933">
    <property type="entry name" value="TRNA 5-METHYLAMINOMETHYL-2-THIOURIDYLATE -METHYLTRANSFERASE"/>
    <property type="match status" value="1"/>
</dbReference>
<dbReference type="Pfam" id="PF03054">
    <property type="entry name" value="tRNA_Me_trans"/>
    <property type="match status" value="1"/>
</dbReference>
<dbReference type="Pfam" id="PF20258">
    <property type="entry name" value="tRNA_Me_trans_C"/>
    <property type="match status" value="1"/>
</dbReference>
<dbReference type="Pfam" id="PF20259">
    <property type="entry name" value="tRNA_Me_trans_M"/>
    <property type="match status" value="1"/>
</dbReference>
<dbReference type="SUPFAM" id="SSF52402">
    <property type="entry name" value="Adenine nucleotide alpha hydrolases-like"/>
    <property type="match status" value="1"/>
</dbReference>
<evidence type="ECO:0000255" key="1">
    <source>
        <dbReference type="HAMAP-Rule" id="MF_00144"/>
    </source>
</evidence>
<evidence type="ECO:0000305" key="2"/>
<proteinExistence type="inferred from homology"/>
<keyword id="KW-0067">ATP-binding</keyword>
<keyword id="KW-0963">Cytoplasm</keyword>
<keyword id="KW-1015">Disulfide bond</keyword>
<keyword id="KW-0547">Nucleotide-binding</keyword>
<keyword id="KW-0694">RNA-binding</keyword>
<keyword id="KW-0808">Transferase</keyword>
<keyword id="KW-0819">tRNA processing</keyword>
<keyword id="KW-0820">tRNA-binding</keyword>
<accession>A9KE87</accession>
<gene>
    <name evidence="1" type="primary">mnmA</name>
    <name type="synonym">trmU</name>
    <name type="ordered locus">CBUD_1245</name>
</gene>
<feature type="chain" id="PRO_1000076563" description="tRNA-specific 2-thiouridylase MnmA">
    <location>
        <begin position="1"/>
        <end position="362"/>
    </location>
</feature>
<feature type="region of interest" description="Interaction with target base in tRNA" evidence="1">
    <location>
        <begin position="99"/>
        <end position="101"/>
    </location>
</feature>
<feature type="region of interest" description="Interaction with tRNA" evidence="1">
    <location>
        <begin position="150"/>
        <end position="152"/>
    </location>
</feature>
<feature type="active site" description="Nucleophile" evidence="1">
    <location>
        <position position="104"/>
    </location>
</feature>
<feature type="active site" description="Cysteine persulfide intermediate" evidence="1">
    <location>
        <position position="200"/>
    </location>
</feature>
<feature type="binding site" evidence="1">
    <location>
        <begin position="13"/>
        <end position="20"/>
    </location>
    <ligand>
        <name>ATP</name>
        <dbReference type="ChEBI" id="CHEBI:30616"/>
    </ligand>
</feature>
<feature type="binding site" evidence="1">
    <location>
        <position position="39"/>
    </location>
    <ligand>
        <name>ATP</name>
        <dbReference type="ChEBI" id="CHEBI:30616"/>
    </ligand>
</feature>
<feature type="binding site" evidence="1">
    <location>
        <position position="128"/>
    </location>
    <ligand>
        <name>ATP</name>
        <dbReference type="ChEBI" id="CHEBI:30616"/>
    </ligand>
</feature>
<feature type="site" description="Interaction with tRNA" evidence="1">
    <location>
        <position position="129"/>
    </location>
</feature>
<feature type="site" description="Interaction with tRNA" evidence="1">
    <location>
        <position position="345"/>
    </location>
</feature>
<feature type="disulfide bond" description="Alternate" evidence="1">
    <location>
        <begin position="104"/>
        <end position="200"/>
    </location>
</feature>